<sequence>MVTHGKKYQDAIKLLDQSAAYAPAEAIDLAKKMSAAKFDETVEMHLKMGLDPKNATQQLRGVAVLPHGLGKTVRVLVFAQGEAEKAAQVAGADVYGGDELIKKIEAGFLDFDVAISTPDMMSKVGKLGKVLGRRGLMPNPKSGTVVPAEDFKKVIEEARKGRVEFKLDRSGIVHIILGKASFEGQMLLENMTSVVDAIIRSKPTGAKGQYIKSAYLATTMGPGVRLDLRAVSAMGGV</sequence>
<organism>
    <name type="scientific">Dehalococcoides mccartyi (strain ATCC BAA-2100 / JCM 16839 / KCTC 5957 / BAV1)</name>
    <dbReference type="NCBI Taxonomy" id="216389"/>
    <lineage>
        <taxon>Bacteria</taxon>
        <taxon>Bacillati</taxon>
        <taxon>Chloroflexota</taxon>
        <taxon>Dehalococcoidia</taxon>
        <taxon>Dehalococcoidales</taxon>
        <taxon>Dehalococcoidaceae</taxon>
        <taxon>Dehalococcoides</taxon>
    </lineage>
</organism>
<name>RL1_DEHMB</name>
<protein>
    <recommendedName>
        <fullName evidence="1">Large ribosomal subunit protein uL1</fullName>
    </recommendedName>
    <alternativeName>
        <fullName evidence="2">50S ribosomal protein L1</fullName>
    </alternativeName>
</protein>
<evidence type="ECO:0000255" key="1">
    <source>
        <dbReference type="HAMAP-Rule" id="MF_01318"/>
    </source>
</evidence>
<evidence type="ECO:0000305" key="2"/>
<reference key="1">
    <citation type="submission" date="2007-05" db="EMBL/GenBank/DDBJ databases">
        <title>Complete sequence of Dehalococcoides sp. BAV1.</title>
        <authorList>
            <consortium name="US DOE Joint Genome Institute"/>
            <person name="Copeland A."/>
            <person name="Lucas S."/>
            <person name="Lapidus A."/>
            <person name="Barry K."/>
            <person name="Detter J.C."/>
            <person name="Glavina del Rio T."/>
            <person name="Hammon N."/>
            <person name="Israni S."/>
            <person name="Pitluck S."/>
            <person name="Lowry S."/>
            <person name="Clum A."/>
            <person name="Schmutz J."/>
            <person name="Larimer F."/>
            <person name="Land M."/>
            <person name="Hauser L."/>
            <person name="Kyrpides N."/>
            <person name="Kim E."/>
            <person name="Ritalahti K.M."/>
            <person name="Loeffler F."/>
            <person name="Richardson P."/>
        </authorList>
    </citation>
    <scope>NUCLEOTIDE SEQUENCE [LARGE SCALE GENOMIC DNA]</scope>
    <source>
        <strain>ATCC BAA-2100 / JCM 16839 / KCTC 5957 / BAV1</strain>
    </source>
</reference>
<comment type="function">
    <text evidence="1">Binds directly to 23S rRNA. The L1 stalk is quite mobile in the ribosome, and is involved in E site tRNA release.</text>
</comment>
<comment type="function">
    <text evidence="1">Protein L1 is also a translational repressor protein, it controls the translation of the L11 operon by binding to its mRNA.</text>
</comment>
<comment type="subunit">
    <text evidence="1">Part of the 50S ribosomal subunit.</text>
</comment>
<comment type="similarity">
    <text evidence="1">Belongs to the universal ribosomal protein uL1 family.</text>
</comment>
<proteinExistence type="inferred from homology"/>
<accession>A5FQR1</accession>
<dbReference type="EMBL" id="CP000688">
    <property type="protein sequence ID" value="ABQ17465.1"/>
    <property type="molecule type" value="Genomic_DNA"/>
</dbReference>
<dbReference type="SMR" id="A5FQR1"/>
<dbReference type="KEGG" id="deb:DehaBAV1_0883"/>
<dbReference type="PATRIC" id="fig|216389.18.peg.933"/>
<dbReference type="HOGENOM" id="CLU_062853_0_0_0"/>
<dbReference type="GO" id="GO:0015934">
    <property type="term" value="C:large ribosomal subunit"/>
    <property type="evidence" value="ECO:0007669"/>
    <property type="project" value="InterPro"/>
</dbReference>
<dbReference type="GO" id="GO:0019843">
    <property type="term" value="F:rRNA binding"/>
    <property type="evidence" value="ECO:0007669"/>
    <property type="project" value="UniProtKB-UniRule"/>
</dbReference>
<dbReference type="GO" id="GO:0003735">
    <property type="term" value="F:structural constituent of ribosome"/>
    <property type="evidence" value="ECO:0007669"/>
    <property type="project" value="InterPro"/>
</dbReference>
<dbReference type="GO" id="GO:0000049">
    <property type="term" value="F:tRNA binding"/>
    <property type="evidence" value="ECO:0007669"/>
    <property type="project" value="UniProtKB-KW"/>
</dbReference>
<dbReference type="GO" id="GO:0006417">
    <property type="term" value="P:regulation of translation"/>
    <property type="evidence" value="ECO:0007669"/>
    <property type="project" value="UniProtKB-KW"/>
</dbReference>
<dbReference type="GO" id="GO:0006412">
    <property type="term" value="P:translation"/>
    <property type="evidence" value="ECO:0007669"/>
    <property type="project" value="UniProtKB-UniRule"/>
</dbReference>
<dbReference type="CDD" id="cd00403">
    <property type="entry name" value="Ribosomal_L1"/>
    <property type="match status" value="1"/>
</dbReference>
<dbReference type="FunFam" id="3.40.50.790:FF:000001">
    <property type="entry name" value="50S ribosomal protein L1"/>
    <property type="match status" value="1"/>
</dbReference>
<dbReference type="Gene3D" id="3.30.190.20">
    <property type="match status" value="1"/>
</dbReference>
<dbReference type="Gene3D" id="3.40.50.790">
    <property type="match status" value="1"/>
</dbReference>
<dbReference type="HAMAP" id="MF_01318_B">
    <property type="entry name" value="Ribosomal_uL1_B"/>
    <property type="match status" value="1"/>
</dbReference>
<dbReference type="InterPro" id="IPR005878">
    <property type="entry name" value="Ribosom_uL1_bac-type"/>
</dbReference>
<dbReference type="InterPro" id="IPR002143">
    <property type="entry name" value="Ribosomal_uL1"/>
</dbReference>
<dbReference type="InterPro" id="IPR023674">
    <property type="entry name" value="Ribosomal_uL1-like"/>
</dbReference>
<dbReference type="InterPro" id="IPR028364">
    <property type="entry name" value="Ribosomal_uL1/biogenesis"/>
</dbReference>
<dbReference type="InterPro" id="IPR016095">
    <property type="entry name" value="Ribosomal_uL1_3-a/b-sand"/>
</dbReference>
<dbReference type="InterPro" id="IPR023673">
    <property type="entry name" value="Ribosomal_uL1_CS"/>
</dbReference>
<dbReference type="NCBIfam" id="TIGR01169">
    <property type="entry name" value="rplA_bact"/>
    <property type="match status" value="1"/>
</dbReference>
<dbReference type="PANTHER" id="PTHR36427">
    <property type="entry name" value="54S RIBOSOMAL PROTEIN L1, MITOCHONDRIAL"/>
    <property type="match status" value="1"/>
</dbReference>
<dbReference type="PANTHER" id="PTHR36427:SF3">
    <property type="entry name" value="LARGE RIBOSOMAL SUBUNIT PROTEIN UL1M"/>
    <property type="match status" value="1"/>
</dbReference>
<dbReference type="Pfam" id="PF00687">
    <property type="entry name" value="Ribosomal_L1"/>
    <property type="match status" value="1"/>
</dbReference>
<dbReference type="PIRSF" id="PIRSF002155">
    <property type="entry name" value="Ribosomal_L1"/>
    <property type="match status" value="1"/>
</dbReference>
<dbReference type="SUPFAM" id="SSF56808">
    <property type="entry name" value="Ribosomal protein L1"/>
    <property type="match status" value="1"/>
</dbReference>
<dbReference type="PROSITE" id="PS01199">
    <property type="entry name" value="RIBOSOMAL_L1"/>
    <property type="match status" value="1"/>
</dbReference>
<gene>
    <name evidence="1" type="primary">rplA</name>
    <name type="ordered locus">DehaBAV1_0883</name>
</gene>
<keyword id="KW-0678">Repressor</keyword>
<keyword id="KW-0687">Ribonucleoprotein</keyword>
<keyword id="KW-0689">Ribosomal protein</keyword>
<keyword id="KW-0694">RNA-binding</keyword>
<keyword id="KW-0699">rRNA-binding</keyword>
<keyword id="KW-0810">Translation regulation</keyword>
<keyword id="KW-0820">tRNA-binding</keyword>
<feature type="chain" id="PRO_1000086282" description="Large ribosomal subunit protein uL1">
    <location>
        <begin position="1"/>
        <end position="237"/>
    </location>
</feature>